<feature type="chain" id="PRO_0000384778" description="Ribosome maturation factor RimP">
    <location>
        <begin position="1"/>
        <end position="186"/>
    </location>
</feature>
<accession>A5VCZ9</accession>
<name>RIMP_RHIWR</name>
<gene>
    <name evidence="1" type="primary">rimP</name>
    <name type="ordered locus">Swit_3820</name>
</gene>
<evidence type="ECO:0000255" key="1">
    <source>
        <dbReference type="HAMAP-Rule" id="MF_01077"/>
    </source>
</evidence>
<keyword id="KW-0963">Cytoplasm</keyword>
<keyword id="KW-1185">Reference proteome</keyword>
<keyword id="KW-0690">Ribosome biogenesis</keyword>
<dbReference type="EMBL" id="CP000699">
    <property type="protein sequence ID" value="ABQ70165.1"/>
    <property type="molecule type" value="Genomic_DNA"/>
</dbReference>
<dbReference type="SMR" id="A5VCZ9"/>
<dbReference type="STRING" id="392499.Swit_3820"/>
<dbReference type="PaxDb" id="392499-Swit_3820"/>
<dbReference type="KEGG" id="swi:Swit_3820"/>
<dbReference type="eggNOG" id="COG0779">
    <property type="taxonomic scope" value="Bacteria"/>
</dbReference>
<dbReference type="HOGENOM" id="CLU_070525_0_1_5"/>
<dbReference type="OrthoDB" id="9805006at2"/>
<dbReference type="Proteomes" id="UP000001989">
    <property type="component" value="Chromosome"/>
</dbReference>
<dbReference type="GO" id="GO:0005829">
    <property type="term" value="C:cytosol"/>
    <property type="evidence" value="ECO:0007669"/>
    <property type="project" value="TreeGrafter"/>
</dbReference>
<dbReference type="GO" id="GO:0000028">
    <property type="term" value="P:ribosomal small subunit assembly"/>
    <property type="evidence" value="ECO:0007669"/>
    <property type="project" value="TreeGrafter"/>
</dbReference>
<dbReference type="GO" id="GO:0006412">
    <property type="term" value="P:translation"/>
    <property type="evidence" value="ECO:0007669"/>
    <property type="project" value="TreeGrafter"/>
</dbReference>
<dbReference type="CDD" id="cd01734">
    <property type="entry name" value="YlxS_C"/>
    <property type="match status" value="1"/>
</dbReference>
<dbReference type="Gene3D" id="2.30.30.180">
    <property type="entry name" value="Ribosome maturation factor RimP, C-terminal domain"/>
    <property type="match status" value="1"/>
</dbReference>
<dbReference type="Gene3D" id="3.30.300.70">
    <property type="entry name" value="RimP-like superfamily, N-terminal"/>
    <property type="match status" value="1"/>
</dbReference>
<dbReference type="HAMAP" id="MF_01077">
    <property type="entry name" value="RimP"/>
    <property type="match status" value="1"/>
</dbReference>
<dbReference type="InterPro" id="IPR003728">
    <property type="entry name" value="Ribosome_maturation_RimP"/>
</dbReference>
<dbReference type="InterPro" id="IPR028998">
    <property type="entry name" value="RimP_C"/>
</dbReference>
<dbReference type="InterPro" id="IPR036847">
    <property type="entry name" value="RimP_C_sf"/>
</dbReference>
<dbReference type="InterPro" id="IPR028989">
    <property type="entry name" value="RimP_N"/>
</dbReference>
<dbReference type="InterPro" id="IPR035956">
    <property type="entry name" value="RimP_N_sf"/>
</dbReference>
<dbReference type="NCBIfam" id="NF011229">
    <property type="entry name" value="PRK14636.1"/>
    <property type="match status" value="1"/>
</dbReference>
<dbReference type="PANTHER" id="PTHR33867">
    <property type="entry name" value="RIBOSOME MATURATION FACTOR RIMP"/>
    <property type="match status" value="1"/>
</dbReference>
<dbReference type="PANTHER" id="PTHR33867:SF1">
    <property type="entry name" value="RIBOSOME MATURATION FACTOR RIMP"/>
    <property type="match status" value="1"/>
</dbReference>
<dbReference type="Pfam" id="PF17384">
    <property type="entry name" value="DUF150_C"/>
    <property type="match status" value="1"/>
</dbReference>
<dbReference type="Pfam" id="PF02576">
    <property type="entry name" value="RimP_N"/>
    <property type="match status" value="1"/>
</dbReference>
<dbReference type="SUPFAM" id="SSF74942">
    <property type="entry name" value="YhbC-like, C-terminal domain"/>
    <property type="match status" value="1"/>
</dbReference>
<dbReference type="SUPFAM" id="SSF75420">
    <property type="entry name" value="YhbC-like, N-terminal domain"/>
    <property type="match status" value="1"/>
</dbReference>
<comment type="function">
    <text evidence="1">Required for maturation of 30S ribosomal subunits.</text>
</comment>
<comment type="subcellular location">
    <subcellularLocation>
        <location evidence="1">Cytoplasm</location>
    </subcellularLocation>
</comment>
<comment type="similarity">
    <text evidence="1">Belongs to the RimP family.</text>
</comment>
<sequence>MADIAALTKLIEPEAKALGLDLVRVAFFGGKSDPTLQVMAERPDTRQLDIADCEALSRRISDKFDELDPIEDAYRLEVSSPGIDRPLTRVKDWADWSGFDARVKLAAPLDGRKQFDGRIVASDGDSVTLGVNKLGEVTVPLAQIASAKLILTDALIKATAPLSTEGVDQIVEDAPHRGAGKIQLEG</sequence>
<organism>
    <name type="scientific">Rhizorhabdus wittichii (strain DSM 6014 / CCUG 31198 / JCM 15750 / NBRC 105917 / EY 4224 / RW1)</name>
    <name type="common">Sphingomonas wittichii</name>
    <dbReference type="NCBI Taxonomy" id="392499"/>
    <lineage>
        <taxon>Bacteria</taxon>
        <taxon>Pseudomonadati</taxon>
        <taxon>Pseudomonadota</taxon>
        <taxon>Alphaproteobacteria</taxon>
        <taxon>Sphingomonadales</taxon>
        <taxon>Sphingomonadaceae</taxon>
        <taxon>Rhizorhabdus</taxon>
    </lineage>
</organism>
<proteinExistence type="inferred from homology"/>
<protein>
    <recommendedName>
        <fullName evidence="1">Ribosome maturation factor RimP</fullName>
    </recommendedName>
</protein>
<reference key="1">
    <citation type="journal article" date="2010" name="J. Bacteriol.">
        <title>Genome sequence of the dioxin-mineralizing bacterium Sphingomonas wittichii RW1.</title>
        <authorList>
            <person name="Miller T.R."/>
            <person name="Delcher A.L."/>
            <person name="Salzberg S.L."/>
            <person name="Saunders E."/>
            <person name="Detter J.C."/>
            <person name="Halden R.U."/>
        </authorList>
    </citation>
    <scope>NUCLEOTIDE SEQUENCE [LARGE SCALE GENOMIC DNA]</scope>
    <source>
        <strain>DSM 6014 / CCUG 31198 / JCM 15750 / NBRC 105917 / EY 4224 / RW1</strain>
    </source>
</reference>